<dbReference type="EC" id="1.3.1.98" evidence="1"/>
<dbReference type="EMBL" id="CP001340">
    <property type="protein sequence ID" value="ACL96093.1"/>
    <property type="molecule type" value="Genomic_DNA"/>
</dbReference>
<dbReference type="RefSeq" id="WP_010920402.1">
    <property type="nucleotide sequence ID" value="NC_011916.1"/>
</dbReference>
<dbReference type="RefSeq" id="YP_002518001.1">
    <property type="nucleotide sequence ID" value="NC_011916.1"/>
</dbReference>
<dbReference type="SMR" id="B8H085"/>
<dbReference type="GeneID" id="7332730"/>
<dbReference type="KEGG" id="ccs:CCNA_02628"/>
<dbReference type="PATRIC" id="fig|565050.3.peg.2577"/>
<dbReference type="HOGENOM" id="CLU_035304_1_0_5"/>
<dbReference type="OrthoDB" id="9804753at2"/>
<dbReference type="PhylomeDB" id="B8H085"/>
<dbReference type="UniPathway" id="UPA00219"/>
<dbReference type="Proteomes" id="UP000001364">
    <property type="component" value="Chromosome"/>
</dbReference>
<dbReference type="GO" id="GO:0005829">
    <property type="term" value="C:cytosol"/>
    <property type="evidence" value="ECO:0007669"/>
    <property type="project" value="TreeGrafter"/>
</dbReference>
<dbReference type="GO" id="GO:0071949">
    <property type="term" value="F:FAD binding"/>
    <property type="evidence" value="ECO:0007669"/>
    <property type="project" value="InterPro"/>
</dbReference>
<dbReference type="GO" id="GO:0008762">
    <property type="term" value="F:UDP-N-acetylmuramate dehydrogenase activity"/>
    <property type="evidence" value="ECO:0007669"/>
    <property type="project" value="UniProtKB-UniRule"/>
</dbReference>
<dbReference type="GO" id="GO:0051301">
    <property type="term" value="P:cell division"/>
    <property type="evidence" value="ECO:0007669"/>
    <property type="project" value="UniProtKB-KW"/>
</dbReference>
<dbReference type="GO" id="GO:0071555">
    <property type="term" value="P:cell wall organization"/>
    <property type="evidence" value="ECO:0007669"/>
    <property type="project" value="UniProtKB-KW"/>
</dbReference>
<dbReference type="GO" id="GO:0009252">
    <property type="term" value="P:peptidoglycan biosynthetic process"/>
    <property type="evidence" value="ECO:0007669"/>
    <property type="project" value="UniProtKB-UniRule"/>
</dbReference>
<dbReference type="GO" id="GO:0008360">
    <property type="term" value="P:regulation of cell shape"/>
    <property type="evidence" value="ECO:0007669"/>
    <property type="project" value="UniProtKB-KW"/>
</dbReference>
<dbReference type="Gene3D" id="3.30.465.10">
    <property type="match status" value="1"/>
</dbReference>
<dbReference type="Gene3D" id="3.90.78.10">
    <property type="entry name" value="UDP-N-acetylenolpyruvoylglucosamine reductase, C-terminal domain"/>
    <property type="match status" value="1"/>
</dbReference>
<dbReference type="Gene3D" id="3.30.43.10">
    <property type="entry name" value="Uridine Diphospho-n-acetylenolpyruvylglucosamine Reductase, domain 2"/>
    <property type="match status" value="1"/>
</dbReference>
<dbReference type="HAMAP" id="MF_00037">
    <property type="entry name" value="MurB"/>
    <property type="match status" value="1"/>
</dbReference>
<dbReference type="InterPro" id="IPR016166">
    <property type="entry name" value="FAD-bd_PCMH"/>
</dbReference>
<dbReference type="InterPro" id="IPR036318">
    <property type="entry name" value="FAD-bd_PCMH-like_sf"/>
</dbReference>
<dbReference type="InterPro" id="IPR016167">
    <property type="entry name" value="FAD-bd_PCMH_sub1"/>
</dbReference>
<dbReference type="InterPro" id="IPR016169">
    <property type="entry name" value="FAD-bd_PCMH_sub2"/>
</dbReference>
<dbReference type="InterPro" id="IPR003170">
    <property type="entry name" value="MurB"/>
</dbReference>
<dbReference type="InterPro" id="IPR011601">
    <property type="entry name" value="MurB_C"/>
</dbReference>
<dbReference type="InterPro" id="IPR036635">
    <property type="entry name" value="MurB_C_sf"/>
</dbReference>
<dbReference type="InterPro" id="IPR006094">
    <property type="entry name" value="Oxid_FAD_bind_N"/>
</dbReference>
<dbReference type="NCBIfam" id="TIGR00179">
    <property type="entry name" value="murB"/>
    <property type="match status" value="1"/>
</dbReference>
<dbReference type="NCBIfam" id="NF010480">
    <property type="entry name" value="PRK13905.1"/>
    <property type="match status" value="1"/>
</dbReference>
<dbReference type="PANTHER" id="PTHR21071">
    <property type="entry name" value="UDP-N-ACETYLENOLPYRUVOYLGLUCOSAMINE REDUCTASE"/>
    <property type="match status" value="1"/>
</dbReference>
<dbReference type="PANTHER" id="PTHR21071:SF4">
    <property type="entry name" value="UDP-N-ACETYLENOLPYRUVOYLGLUCOSAMINE REDUCTASE"/>
    <property type="match status" value="1"/>
</dbReference>
<dbReference type="Pfam" id="PF01565">
    <property type="entry name" value="FAD_binding_4"/>
    <property type="match status" value="1"/>
</dbReference>
<dbReference type="Pfam" id="PF02873">
    <property type="entry name" value="MurB_C"/>
    <property type="match status" value="1"/>
</dbReference>
<dbReference type="SUPFAM" id="SSF56176">
    <property type="entry name" value="FAD-binding/transporter-associated domain-like"/>
    <property type="match status" value="1"/>
</dbReference>
<dbReference type="SUPFAM" id="SSF56194">
    <property type="entry name" value="Uridine diphospho-N-Acetylenolpyruvylglucosamine reductase, MurB, C-terminal domain"/>
    <property type="match status" value="1"/>
</dbReference>
<dbReference type="PROSITE" id="PS51387">
    <property type="entry name" value="FAD_PCMH"/>
    <property type="match status" value="1"/>
</dbReference>
<feature type="chain" id="PRO_1000191407" description="UDP-N-acetylenolpyruvoylglucosamine reductase">
    <location>
        <begin position="1"/>
        <end position="301"/>
    </location>
</feature>
<feature type="domain" description="FAD-binding PCMH-type" evidence="1">
    <location>
        <begin position="27"/>
        <end position="194"/>
    </location>
</feature>
<feature type="active site" evidence="1">
    <location>
        <position position="172"/>
    </location>
</feature>
<feature type="active site" description="Proton donor" evidence="1">
    <location>
        <position position="223"/>
    </location>
</feature>
<feature type="active site" evidence="1">
    <location>
        <position position="293"/>
    </location>
</feature>
<proteinExistence type="inferred from homology"/>
<accession>B8H085</accession>
<gene>
    <name evidence="1" type="primary">murB</name>
    <name type="ordered locus">CCNA_02628</name>
</gene>
<name>MURB_CAUVN</name>
<comment type="function">
    <text evidence="1">Cell wall formation.</text>
</comment>
<comment type="catalytic activity">
    <reaction evidence="1">
        <text>UDP-N-acetyl-alpha-D-muramate + NADP(+) = UDP-N-acetyl-3-O-(1-carboxyvinyl)-alpha-D-glucosamine + NADPH + H(+)</text>
        <dbReference type="Rhea" id="RHEA:12248"/>
        <dbReference type="ChEBI" id="CHEBI:15378"/>
        <dbReference type="ChEBI" id="CHEBI:57783"/>
        <dbReference type="ChEBI" id="CHEBI:58349"/>
        <dbReference type="ChEBI" id="CHEBI:68483"/>
        <dbReference type="ChEBI" id="CHEBI:70757"/>
        <dbReference type="EC" id="1.3.1.98"/>
    </reaction>
</comment>
<comment type="cofactor">
    <cofactor evidence="1">
        <name>FAD</name>
        <dbReference type="ChEBI" id="CHEBI:57692"/>
    </cofactor>
</comment>
<comment type="pathway">
    <text evidence="1">Cell wall biogenesis; peptidoglycan biosynthesis.</text>
</comment>
<comment type="subcellular location">
    <subcellularLocation>
        <location evidence="1">Cytoplasm</location>
    </subcellularLocation>
</comment>
<comment type="similarity">
    <text evidence="1">Belongs to the MurB family.</text>
</comment>
<organism>
    <name type="scientific">Caulobacter vibrioides (strain NA1000 / CB15N)</name>
    <name type="common">Caulobacter crescentus</name>
    <dbReference type="NCBI Taxonomy" id="565050"/>
    <lineage>
        <taxon>Bacteria</taxon>
        <taxon>Pseudomonadati</taxon>
        <taxon>Pseudomonadota</taxon>
        <taxon>Alphaproteobacteria</taxon>
        <taxon>Caulobacterales</taxon>
        <taxon>Caulobacteraceae</taxon>
        <taxon>Caulobacter</taxon>
    </lineage>
</organism>
<protein>
    <recommendedName>
        <fullName evidence="1">UDP-N-acetylenolpyruvoylglucosamine reductase</fullName>
        <ecNumber evidence="1">1.3.1.98</ecNumber>
    </recommendedName>
    <alternativeName>
        <fullName evidence="1">UDP-N-acetylmuramate dehydrogenase</fullName>
    </alternativeName>
</protein>
<reference key="1">
    <citation type="journal article" date="2010" name="J. Bacteriol.">
        <title>The genetic basis of laboratory adaptation in Caulobacter crescentus.</title>
        <authorList>
            <person name="Marks M.E."/>
            <person name="Castro-Rojas C.M."/>
            <person name="Teiling C."/>
            <person name="Du L."/>
            <person name="Kapatral V."/>
            <person name="Walunas T.L."/>
            <person name="Crosson S."/>
        </authorList>
    </citation>
    <scope>NUCLEOTIDE SEQUENCE [LARGE SCALE GENOMIC DNA]</scope>
    <source>
        <strain>NA1000 / CB15N</strain>
    </source>
</reference>
<evidence type="ECO:0000255" key="1">
    <source>
        <dbReference type="HAMAP-Rule" id="MF_00037"/>
    </source>
</evidence>
<sequence>MTWKTQLPTARGKLLIDEALAPFTWFRVGGPADVVFLPADEQDLSDFLKGLDPSVPVMAIGVGSNLLVRDGGVDGVVIRLGKGFNGVEALGDNRIKAGSAVPDAILARKAAEAGIAGLEFYVGVPGTIGGAVIMNAGCYGAETVNVVKSVRVMNRAGVVRELSVEDLHYTYRHSALQDGEPVIVLDAIFEGTPDEPEAIKARMAEITARRETTQPIREKTGGSTFKNPPGHSSWKLVDEAGWRGKPYGGAMFSPLHSNFLINTGEATAADLEGLGEAVRADVLAKTGVQLDWEIKRIGRAG</sequence>
<keyword id="KW-0131">Cell cycle</keyword>
<keyword id="KW-0132">Cell division</keyword>
<keyword id="KW-0133">Cell shape</keyword>
<keyword id="KW-0961">Cell wall biogenesis/degradation</keyword>
<keyword id="KW-0963">Cytoplasm</keyword>
<keyword id="KW-0274">FAD</keyword>
<keyword id="KW-0285">Flavoprotein</keyword>
<keyword id="KW-0521">NADP</keyword>
<keyword id="KW-0560">Oxidoreductase</keyword>
<keyword id="KW-0573">Peptidoglycan synthesis</keyword>
<keyword id="KW-1185">Reference proteome</keyword>